<comment type="similarity">
    <text evidence="1">Belongs to the hssA/B family.</text>
</comment>
<reference key="1">
    <citation type="journal article" date="2002" name="Nature">
        <title>Sequence and analysis of chromosome 2 of Dictyostelium discoideum.</title>
        <authorList>
            <person name="Gloeckner G."/>
            <person name="Eichinger L."/>
            <person name="Szafranski K."/>
            <person name="Pachebat J.A."/>
            <person name="Bankier A.T."/>
            <person name="Dear P.H."/>
            <person name="Lehmann R."/>
            <person name="Baumgart C."/>
            <person name="Parra G."/>
            <person name="Abril J.F."/>
            <person name="Guigo R."/>
            <person name="Kumpf K."/>
            <person name="Tunggal B."/>
            <person name="Cox E.C."/>
            <person name="Quail M.A."/>
            <person name="Platzer M."/>
            <person name="Rosenthal A."/>
            <person name="Noegel A.A."/>
        </authorList>
    </citation>
    <scope>NUCLEOTIDE SEQUENCE [LARGE SCALE GENOMIC DNA]</scope>
    <source>
        <strain>AX4</strain>
    </source>
</reference>
<reference key="2">
    <citation type="journal article" date="2005" name="Nature">
        <title>The genome of the social amoeba Dictyostelium discoideum.</title>
        <authorList>
            <person name="Eichinger L."/>
            <person name="Pachebat J.A."/>
            <person name="Gloeckner G."/>
            <person name="Rajandream M.A."/>
            <person name="Sucgang R."/>
            <person name="Berriman M."/>
            <person name="Song J."/>
            <person name="Olsen R."/>
            <person name="Szafranski K."/>
            <person name="Xu Q."/>
            <person name="Tunggal B."/>
            <person name="Kummerfeld S."/>
            <person name="Madera M."/>
            <person name="Konfortov B.A."/>
            <person name="Rivero F."/>
            <person name="Bankier A.T."/>
            <person name="Lehmann R."/>
            <person name="Hamlin N."/>
            <person name="Davies R."/>
            <person name="Gaudet P."/>
            <person name="Fey P."/>
            <person name="Pilcher K."/>
            <person name="Chen G."/>
            <person name="Saunders D."/>
            <person name="Sodergren E.J."/>
            <person name="Davis P."/>
            <person name="Kerhornou A."/>
            <person name="Nie X."/>
            <person name="Hall N."/>
            <person name="Anjard C."/>
            <person name="Hemphill L."/>
            <person name="Bason N."/>
            <person name="Farbrother P."/>
            <person name="Desany B."/>
            <person name="Just E."/>
            <person name="Morio T."/>
            <person name="Rost R."/>
            <person name="Churcher C.M."/>
            <person name="Cooper J."/>
            <person name="Haydock S."/>
            <person name="van Driessche N."/>
            <person name="Cronin A."/>
            <person name="Goodhead I."/>
            <person name="Muzny D.M."/>
            <person name="Mourier T."/>
            <person name="Pain A."/>
            <person name="Lu M."/>
            <person name="Harper D."/>
            <person name="Lindsay R."/>
            <person name="Hauser H."/>
            <person name="James K.D."/>
            <person name="Quiles M."/>
            <person name="Madan Babu M."/>
            <person name="Saito T."/>
            <person name="Buchrieser C."/>
            <person name="Wardroper A."/>
            <person name="Felder M."/>
            <person name="Thangavelu M."/>
            <person name="Johnson D."/>
            <person name="Knights A."/>
            <person name="Loulseged H."/>
            <person name="Mungall K.L."/>
            <person name="Oliver K."/>
            <person name="Price C."/>
            <person name="Quail M.A."/>
            <person name="Urushihara H."/>
            <person name="Hernandez J."/>
            <person name="Rabbinowitsch E."/>
            <person name="Steffen D."/>
            <person name="Sanders M."/>
            <person name="Ma J."/>
            <person name="Kohara Y."/>
            <person name="Sharp S."/>
            <person name="Simmonds M.N."/>
            <person name="Spiegler S."/>
            <person name="Tivey A."/>
            <person name="Sugano S."/>
            <person name="White B."/>
            <person name="Walker D."/>
            <person name="Woodward J.R."/>
            <person name="Winckler T."/>
            <person name="Tanaka Y."/>
            <person name="Shaulsky G."/>
            <person name="Schleicher M."/>
            <person name="Weinstock G.M."/>
            <person name="Rosenthal A."/>
            <person name="Cox E.C."/>
            <person name="Chisholm R.L."/>
            <person name="Gibbs R.A."/>
            <person name="Loomis W.F."/>
            <person name="Platzer M."/>
            <person name="Kay R.R."/>
            <person name="Williams J.G."/>
            <person name="Dear P.H."/>
            <person name="Noegel A.A."/>
            <person name="Barrell B.G."/>
            <person name="Kuspa A."/>
        </authorList>
    </citation>
    <scope>NUCLEOTIDE SEQUENCE [LARGE SCALE GENOMIC DNA]</scope>
    <source>
        <strain>AX4</strain>
    </source>
</reference>
<accession>Q75JC6</accession>
<accession>Q55AM0</accession>
<feature type="chain" id="PRO_0000330382" description="HssA/B-like protein 12">
    <location>
        <begin position="1"/>
        <end position="88"/>
    </location>
</feature>
<name>HSL12_DICDI</name>
<dbReference type="EMBL" id="AAFI02000006">
    <property type="protein sequence ID" value="EAL71599.1"/>
    <property type="molecule type" value="Genomic_DNA"/>
</dbReference>
<dbReference type="RefSeq" id="XP_645502.1">
    <property type="nucleotide sequence ID" value="XM_640410.1"/>
</dbReference>
<dbReference type="FunCoup" id="Q75JC6">
    <property type="interactions" value="243"/>
</dbReference>
<dbReference type="PaxDb" id="44689-DDB0238818"/>
<dbReference type="EnsemblProtists" id="EAL71599">
    <property type="protein sequence ID" value="EAL71599"/>
    <property type="gene ID" value="DDB_G0271818"/>
</dbReference>
<dbReference type="GeneID" id="8618131"/>
<dbReference type="KEGG" id="ddi:DDB_G0271818"/>
<dbReference type="dictyBase" id="DDB_G0271818">
    <property type="gene designation" value="sigN7"/>
</dbReference>
<dbReference type="eggNOG" id="ENOG502RIQ1">
    <property type="taxonomic scope" value="Eukaryota"/>
</dbReference>
<dbReference type="HOGENOM" id="CLU_190274_0_0_1"/>
<dbReference type="InParanoid" id="Q75JC6"/>
<dbReference type="PRO" id="PR:Q75JC6"/>
<dbReference type="Proteomes" id="UP000002195">
    <property type="component" value="Chromosome 2"/>
</dbReference>
<dbReference type="GO" id="GO:0030587">
    <property type="term" value="P:sorocarp development"/>
    <property type="evidence" value="ECO:0000318"/>
    <property type="project" value="GO_Central"/>
</dbReference>
<dbReference type="InterPro" id="IPR008455">
    <property type="entry name" value="HssA/B-related"/>
</dbReference>
<dbReference type="PANTHER" id="PTHR31857">
    <property type="entry name" value="HSSA/B-LIKE PROTEIN 17-RELATED"/>
    <property type="match status" value="1"/>
</dbReference>
<dbReference type="PANTHER" id="PTHR31857:SF2">
    <property type="entry name" value="HSSA_B-LIKE PROTEIN 17-RELATED"/>
    <property type="match status" value="1"/>
</dbReference>
<dbReference type="Pfam" id="PF05710">
    <property type="entry name" value="Coiled"/>
    <property type="match status" value="1"/>
</dbReference>
<keyword id="KW-1185">Reference proteome</keyword>
<gene>
    <name type="primary">hssl12</name>
    <name type="ORF">DDB_G0271818</name>
</gene>
<evidence type="ECO:0000305" key="1"/>
<protein>
    <recommendedName>
        <fullName>HssA/B-like protein 12</fullName>
    </recommendedName>
</protein>
<sequence>MTLLASISSIGNVKSISKSNNFSSLSNSSLQSSNSIQCGGCGGSPLIGTVGNLVGGVLVGTGIIVGTVVGTVNGVVGGLLSGPNCGCH</sequence>
<proteinExistence type="inferred from homology"/>
<organism>
    <name type="scientific">Dictyostelium discoideum</name>
    <name type="common">Social amoeba</name>
    <dbReference type="NCBI Taxonomy" id="44689"/>
    <lineage>
        <taxon>Eukaryota</taxon>
        <taxon>Amoebozoa</taxon>
        <taxon>Evosea</taxon>
        <taxon>Eumycetozoa</taxon>
        <taxon>Dictyostelia</taxon>
        <taxon>Dictyosteliales</taxon>
        <taxon>Dictyosteliaceae</taxon>
        <taxon>Dictyostelium</taxon>
    </lineage>
</organism>